<evidence type="ECO:0000255" key="1">
    <source>
        <dbReference type="HAMAP-Rule" id="MF_01522"/>
    </source>
</evidence>
<evidence type="ECO:0000305" key="2"/>
<protein>
    <recommendedName>
        <fullName evidence="1">Probable potassium transport system protein Kup</fullName>
    </recommendedName>
</protein>
<proteinExistence type="inferred from homology"/>
<gene>
    <name evidence="1" type="primary">kup</name>
    <name type="ORF">riorf148</name>
</gene>
<organism>
    <name type="scientific">Rhizobium rhizogenes</name>
    <name type="common">Agrobacterium rhizogenes</name>
    <dbReference type="NCBI Taxonomy" id="359"/>
    <lineage>
        <taxon>Bacteria</taxon>
        <taxon>Pseudomonadati</taxon>
        <taxon>Pseudomonadota</taxon>
        <taxon>Alphaproteobacteria</taxon>
        <taxon>Hyphomicrobiales</taxon>
        <taxon>Rhizobiaceae</taxon>
        <taxon>Rhizobium/Agrobacterium group</taxon>
        <taxon>Rhizobium</taxon>
    </lineage>
</organism>
<name>KUP_RHIRH</name>
<accession>Q9F5A5</accession>
<sequence>MSAESHPTESQMTPKKLFYLTLGSIGVVYGDIGTSPLYAFREALKPVAHDGLTRFEVISLISLMIWALTIIVTIKYVLFLLRADNEGEGGTLSLLALLMKTANGHTAILMLLGLLGAALFLGDAMITPALSVLSAVEGLKLVTPRLSEYIVPISVVILALLFVVQSRGTGAVAKFFGPITAVWFLVMAAAGISHISDDFGILAAFNPYYAVSFLLHEGFYGVVVLGAVFLTVTGAEALYADLGHFGRRPIQWAWFLLVFPSLTLNYLGQGALVLGKPETMSDPFYLMYPQWALLPVVILATAATIIASQAVITGAFSMVRQGINLGFLPRREILFTSETNTGQIFVPSVNAVLFIGVIFLVLSFKTSDALATAYGISVTGAMVVTSIMAFEFVRARWNWSLPVAVIALAPLVILELIFLGANLLKIHDGGYIPILIATAFTVIMWTWRRGTAILMEKTRHTDIPLASFVSSIERKSEHSPAQVPGTAIFLTSDPESAPAALLHNLKHNHVLHDRNVILTIRTVNKPRVPSQDRYKVEQISERFSRVELLFGFMESQNVSQALATLRKAGLKFDIMSTSFYLGRRKLVPDANSGMPYWQDRFYILLANAASLPSDYFHLPANRVVELGSQIIV</sequence>
<geneLocation type="plasmid">
    <name>pRi1724</name>
</geneLocation>
<keyword id="KW-0997">Cell inner membrane</keyword>
<keyword id="KW-1003">Cell membrane</keyword>
<keyword id="KW-0406">Ion transport</keyword>
<keyword id="KW-0472">Membrane</keyword>
<keyword id="KW-0614">Plasmid</keyword>
<keyword id="KW-0630">Potassium</keyword>
<keyword id="KW-0633">Potassium transport</keyword>
<keyword id="KW-0769">Symport</keyword>
<keyword id="KW-0812">Transmembrane</keyword>
<keyword id="KW-1133">Transmembrane helix</keyword>
<keyword id="KW-0813">Transport</keyword>
<reference key="1">
    <citation type="journal article" date="2001" name="J. Mol. Biol.">
        <title>The complete nucleotide sequence of a plant root-inducing (Ri) plasmid indicates its chimeric structure and evolutionary relationship between tumor-inducing (Ti) and symbiotic (Sym) plasmids in Rhizobiaceae.</title>
        <authorList>
            <person name="Moriguchi K."/>
            <person name="Maeda Y."/>
            <person name="Satou M."/>
            <person name="Hardayani N.S.N."/>
            <person name="Kataoka M."/>
            <person name="Tanaka N."/>
            <person name="Yoshida K."/>
        </authorList>
    </citation>
    <scope>NUCLEOTIDE SEQUENCE [GENOMIC DNA]</scope>
    <source>
        <strain>MAFF03-01724</strain>
    </source>
</reference>
<feature type="chain" id="PRO_0000208987" description="Probable potassium transport system protein Kup">
    <location>
        <begin position="1"/>
        <end position="632"/>
    </location>
</feature>
<feature type="transmembrane region" description="Helical" evidence="1">
    <location>
        <begin position="17"/>
        <end position="37"/>
    </location>
</feature>
<feature type="transmembrane region" description="Helical" evidence="1">
    <location>
        <begin position="60"/>
        <end position="80"/>
    </location>
</feature>
<feature type="transmembrane region" description="Helical" evidence="1">
    <location>
        <begin position="106"/>
        <end position="126"/>
    </location>
</feature>
<feature type="transmembrane region" description="Helical" evidence="1">
    <location>
        <begin position="146"/>
        <end position="166"/>
    </location>
</feature>
<feature type="transmembrane region" description="Helical" evidence="1">
    <location>
        <begin position="175"/>
        <end position="195"/>
    </location>
</feature>
<feature type="transmembrane region" description="Helical" evidence="1">
    <location>
        <begin position="210"/>
        <end position="230"/>
    </location>
</feature>
<feature type="transmembrane region" description="Helical" evidence="1">
    <location>
        <begin position="254"/>
        <end position="274"/>
    </location>
</feature>
<feature type="transmembrane region" description="Helical" evidence="1">
    <location>
        <begin position="292"/>
        <end position="312"/>
    </location>
</feature>
<feature type="transmembrane region" description="Helical" evidence="1">
    <location>
        <begin position="344"/>
        <end position="364"/>
    </location>
</feature>
<feature type="transmembrane region" description="Helical" evidence="1">
    <location>
        <begin position="370"/>
        <end position="390"/>
    </location>
</feature>
<feature type="transmembrane region" description="Helical" evidence="1">
    <location>
        <begin position="401"/>
        <end position="421"/>
    </location>
</feature>
<feature type="transmembrane region" description="Helical" evidence="1">
    <location>
        <begin position="426"/>
        <end position="446"/>
    </location>
</feature>
<comment type="function">
    <text evidence="1">Transport of potassium into the cell. Likely operates as a K(+):H(+) symporter.</text>
</comment>
<comment type="catalytic activity">
    <reaction evidence="1">
        <text>K(+)(in) + H(+)(in) = K(+)(out) + H(+)(out)</text>
        <dbReference type="Rhea" id="RHEA:28490"/>
        <dbReference type="ChEBI" id="CHEBI:15378"/>
        <dbReference type="ChEBI" id="CHEBI:29103"/>
    </reaction>
    <physiologicalReaction direction="right-to-left" evidence="1">
        <dbReference type="Rhea" id="RHEA:28492"/>
    </physiologicalReaction>
</comment>
<comment type="subcellular location">
    <subcellularLocation>
        <location evidence="1">Cell inner membrane</location>
        <topology evidence="1">Multi-pass membrane protein</topology>
    </subcellularLocation>
</comment>
<comment type="similarity">
    <text evidence="1 2">Belongs to the HAK/KUP transporter (TC 2.A.72) family.</text>
</comment>
<comment type="sequence caution" evidence="2">
    <conflict type="erroneous initiation">
        <sequence resource="EMBL-CDS" id="BAB16267"/>
    </conflict>
</comment>
<dbReference type="EMBL" id="AP002086">
    <property type="protein sequence ID" value="BAB16267.1"/>
    <property type="status" value="ALT_INIT"/>
    <property type="molecule type" value="Genomic_DNA"/>
</dbReference>
<dbReference type="RefSeq" id="NP_066729.1">
    <property type="nucleotide sequence ID" value="NC_002575.1"/>
</dbReference>
<dbReference type="RefSeq" id="WP_012476026.1">
    <property type="nucleotide sequence ID" value="NZ_SGNY01000012.1"/>
</dbReference>
<dbReference type="RefSeq" id="YP_001961091.1">
    <property type="nucleotide sequence ID" value="NC_010841.1"/>
</dbReference>
<dbReference type="OrthoDB" id="9805577at2"/>
<dbReference type="GO" id="GO:0005886">
    <property type="term" value="C:plasma membrane"/>
    <property type="evidence" value="ECO:0007669"/>
    <property type="project" value="UniProtKB-SubCell"/>
</dbReference>
<dbReference type="GO" id="GO:0015079">
    <property type="term" value="F:potassium ion transmembrane transporter activity"/>
    <property type="evidence" value="ECO:0007669"/>
    <property type="project" value="UniProtKB-UniRule"/>
</dbReference>
<dbReference type="GO" id="GO:0015293">
    <property type="term" value="F:symporter activity"/>
    <property type="evidence" value="ECO:0007669"/>
    <property type="project" value="UniProtKB-UniRule"/>
</dbReference>
<dbReference type="HAMAP" id="MF_01522">
    <property type="entry name" value="Kup"/>
    <property type="match status" value="1"/>
</dbReference>
<dbReference type="InterPro" id="IPR003855">
    <property type="entry name" value="K+_transporter"/>
</dbReference>
<dbReference type="InterPro" id="IPR053952">
    <property type="entry name" value="K_trans_C"/>
</dbReference>
<dbReference type="InterPro" id="IPR053951">
    <property type="entry name" value="K_trans_N"/>
</dbReference>
<dbReference type="InterPro" id="IPR023051">
    <property type="entry name" value="Kup"/>
</dbReference>
<dbReference type="PANTHER" id="PTHR30540:SF79">
    <property type="entry name" value="LOW AFFINITY POTASSIUM TRANSPORT SYSTEM PROTEIN KUP"/>
    <property type="match status" value="1"/>
</dbReference>
<dbReference type="PANTHER" id="PTHR30540">
    <property type="entry name" value="OSMOTIC STRESS POTASSIUM TRANSPORTER"/>
    <property type="match status" value="1"/>
</dbReference>
<dbReference type="Pfam" id="PF02705">
    <property type="entry name" value="K_trans"/>
    <property type="match status" value="1"/>
</dbReference>
<dbReference type="Pfam" id="PF22776">
    <property type="entry name" value="K_trans_C"/>
    <property type="match status" value="1"/>
</dbReference>